<proteinExistence type="inferred from homology"/>
<evidence type="ECO:0000255" key="1">
    <source>
        <dbReference type="HAMAP-Rule" id="MF_00512"/>
    </source>
</evidence>
<evidence type="ECO:0000305" key="2"/>
<dbReference type="EMBL" id="CP001365">
    <property type="protein sequence ID" value="ACM57705.1"/>
    <property type="molecule type" value="Genomic_DNA"/>
</dbReference>
<dbReference type="RefSeq" id="WP_015910828.1">
    <property type="nucleotide sequence ID" value="NC_012029.1"/>
</dbReference>
<dbReference type="SMR" id="B9LR51"/>
<dbReference type="GeneID" id="7400648"/>
<dbReference type="KEGG" id="hla:Hlac_2128"/>
<dbReference type="eggNOG" id="arCOG01946">
    <property type="taxonomic scope" value="Archaea"/>
</dbReference>
<dbReference type="HOGENOM" id="CLU_109671_1_1_2"/>
<dbReference type="Proteomes" id="UP000000740">
    <property type="component" value="Chromosome 1"/>
</dbReference>
<dbReference type="GO" id="GO:1990904">
    <property type="term" value="C:ribonucleoprotein complex"/>
    <property type="evidence" value="ECO:0007669"/>
    <property type="project" value="UniProtKB-KW"/>
</dbReference>
<dbReference type="GO" id="GO:0005840">
    <property type="term" value="C:ribosome"/>
    <property type="evidence" value="ECO:0007669"/>
    <property type="project" value="UniProtKB-KW"/>
</dbReference>
<dbReference type="GO" id="GO:0003735">
    <property type="term" value="F:structural constituent of ribosome"/>
    <property type="evidence" value="ECO:0007669"/>
    <property type="project" value="InterPro"/>
</dbReference>
<dbReference type="GO" id="GO:0006412">
    <property type="term" value="P:translation"/>
    <property type="evidence" value="ECO:0007669"/>
    <property type="project" value="UniProtKB-UniRule"/>
</dbReference>
<dbReference type="HAMAP" id="MF_00512">
    <property type="entry name" value="Ribosomal_eS6"/>
    <property type="match status" value="1"/>
</dbReference>
<dbReference type="InterPro" id="IPR001377">
    <property type="entry name" value="Ribosomal_eS6"/>
</dbReference>
<dbReference type="InterPro" id="IPR020924">
    <property type="entry name" value="Ribosomal_eS6_arc"/>
</dbReference>
<dbReference type="InterPro" id="IPR018282">
    <property type="entry name" value="Ribosomal_eS6_CS"/>
</dbReference>
<dbReference type="NCBIfam" id="NF003294">
    <property type="entry name" value="PRK04290.1-3"/>
    <property type="match status" value="1"/>
</dbReference>
<dbReference type="PANTHER" id="PTHR11502">
    <property type="entry name" value="40S RIBOSOMAL PROTEIN S6"/>
    <property type="match status" value="1"/>
</dbReference>
<dbReference type="Pfam" id="PF01092">
    <property type="entry name" value="Ribosomal_S6e"/>
    <property type="match status" value="1"/>
</dbReference>
<dbReference type="SMART" id="SM01405">
    <property type="entry name" value="Ribosomal_S6e"/>
    <property type="match status" value="1"/>
</dbReference>
<dbReference type="PROSITE" id="PS00578">
    <property type="entry name" value="RIBOSOMAL_S6E"/>
    <property type="match status" value="1"/>
</dbReference>
<comment type="similarity">
    <text evidence="1">Belongs to the eukaryotic ribosomal protein eS6 family.</text>
</comment>
<feature type="chain" id="PRO_1000146102" description="Small ribosomal subunit protein eS6">
    <location>
        <begin position="1"/>
        <end position="135"/>
    </location>
</feature>
<sequence length="135" mass="14360">MAEFKVVIADPNTGETFQREVDGQDANRFLGRDIGDEIGGDAVGLSEHTIAITGGSDETGRPMREDVSGTRLKELLLEGGVGFEPSREGERKRITVRGREIDNDVAQINVSVVEGDDVAAALGEGDADADDADEE</sequence>
<protein>
    <recommendedName>
        <fullName evidence="1">Small ribosomal subunit protein eS6</fullName>
    </recommendedName>
    <alternativeName>
        <fullName evidence="2">30S ribosomal protein S6e</fullName>
    </alternativeName>
</protein>
<organism>
    <name type="scientific">Halorubrum lacusprofundi (strain ATCC 49239 / DSM 5036 / JCM 8891 / ACAM 34)</name>
    <dbReference type="NCBI Taxonomy" id="416348"/>
    <lineage>
        <taxon>Archaea</taxon>
        <taxon>Methanobacteriati</taxon>
        <taxon>Methanobacteriota</taxon>
        <taxon>Stenosarchaea group</taxon>
        <taxon>Halobacteria</taxon>
        <taxon>Halobacteriales</taxon>
        <taxon>Haloferacaceae</taxon>
        <taxon>Halorubrum</taxon>
    </lineage>
</organism>
<name>RS6E_HALLT</name>
<gene>
    <name evidence="1" type="primary">rps6e</name>
    <name type="ordered locus">Hlac_2128</name>
</gene>
<keyword id="KW-1185">Reference proteome</keyword>
<keyword id="KW-0687">Ribonucleoprotein</keyword>
<keyword id="KW-0689">Ribosomal protein</keyword>
<accession>B9LR51</accession>
<reference key="1">
    <citation type="journal article" date="2016" name="Stand. Genomic Sci.">
        <title>Complete genome sequence of the Antarctic Halorubrum lacusprofundi type strain ACAM 34.</title>
        <authorList>
            <person name="Anderson I.J."/>
            <person name="DasSarma P."/>
            <person name="Lucas S."/>
            <person name="Copeland A."/>
            <person name="Lapidus A."/>
            <person name="Del Rio T.G."/>
            <person name="Tice H."/>
            <person name="Dalin E."/>
            <person name="Bruce D.C."/>
            <person name="Goodwin L."/>
            <person name="Pitluck S."/>
            <person name="Sims D."/>
            <person name="Brettin T.S."/>
            <person name="Detter J.C."/>
            <person name="Han C.S."/>
            <person name="Larimer F."/>
            <person name="Hauser L."/>
            <person name="Land M."/>
            <person name="Ivanova N."/>
            <person name="Richardson P."/>
            <person name="Cavicchioli R."/>
            <person name="DasSarma S."/>
            <person name="Woese C.R."/>
            <person name="Kyrpides N.C."/>
        </authorList>
    </citation>
    <scope>NUCLEOTIDE SEQUENCE [LARGE SCALE GENOMIC DNA]</scope>
    <source>
        <strain>ATCC 49239 / DSM 5036 / JCM 8891 / ACAM 34</strain>
    </source>
</reference>